<dbReference type="EC" id="4.1.1.37" evidence="1"/>
<dbReference type="EMBL" id="CP000539">
    <property type="protein sequence ID" value="ABM43968.1"/>
    <property type="molecule type" value="Genomic_DNA"/>
</dbReference>
<dbReference type="SMR" id="A1WCJ3"/>
<dbReference type="STRING" id="232721.Ajs_3861"/>
<dbReference type="KEGG" id="ajs:Ajs_3861"/>
<dbReference type="eggNOG" id="COG0407">
    <property type="taxonomic scope" value="Bacteria"/>
</dbReference>
<dbReference type="HOGENOM" id="CLU_040933_0_0_4"/>
<dbReference type="UniPathway" id="UPA00251">
    <property type="reaction ID" value="UER00321"/>
</dbReference>
<dbReference type="Proteomes" id="UP000000645">
    <property type="component" value="Chromosome"/>
</dbReference>
<dbReference type="GO" id="GO:0005829">
    <property type="term" value="C:cytosol"/>
    <property type="evidence" value="ECO:0007669"/>
    <property type="project" value="TreeGrafter"/>
</dbReference>
<dbReference type="GO" id="GO:0004853">
    <property type="term" value="F:uroporphyrinogen decarboxylase activity"/>
    <property type="evidence" value="ECO:0007669"/>
    <property type="project" value="UniProtKB-UniRule"/>
</dbReference>
<dbReference type="GO" id="GO:0019353">
    <property type="term" value="P:protoporphyrinogen IX biosynthetic process from glutamate"/>
    <property type="evidence" value="ECO:0007669"/>
    <property type="project" value="TreeGrafter"/>
</dbReference>
<dbReference type="CDD" id="cd00717">
    <property type="entry name" value="URO-D"/>
    <property type="match status" value="1"/>
</dbReference>
<dbReference type="FunFam" id="3.20.20.210:FF:000001">
    <property type="entry name" value="Uroporphyrinogen decarboxylase"/>
    <property type="match status" value="1"/>
</dbReference>
<dbReference type="Gene3D" id="3.20.20.210">
    <property type="match status" value="1"/>
</dbReference>
<dbReference type="HAMAP" id="MF_00218">
    <property type="entry name" value="URO_D"/>
    <property type="match status" value="1"/>
</dbReference>
<dbReference type="InterPro" id="IPR038071">
    <property type="entry name" value="UROD/MetE-like_sf"/>
</dbReference>
<dbReference type="InterPro" id="IPR006361">
    <property type="entry name" value="Uroporphyrinogen_deCO2ase_HemE"/>
</dbReference>
<dbReference type="InterPro" id="IPR000257">
    <property type="entry name" value="Uroporphyrinogen_deCOase"/>
</dbReference>
<dbReference type="NCBIfam" id="TIGR01464">
    <property type="entry name" value="hemE"/>
    <property type="match status" value="1"/>
</dbReference>
<dbReference type="PANTHER" id="PTHR21091">
    <property type="entry name" value="METHYLTETRAHYDROFOLATE:HOMOCYSTEINE METHYLTRANSFERASE RELATED"/>
    <property type="match status" value="1"/>
</dbReference>
<dbReference type="PANTHER" id="PTHR21091:SF169">
    <property type="entry name" value="UROPORPHYRINOGEN DECARBOXYLASE"/>
    <property type="match status" value="1"/>
</dbReference>
<dbReference type="Pfam" id="PF01208">
    <property type="entry name" value="URO-D"/>
    <property type="match status" value="1"/>
</dbReference>
<dbReference type="SUPFAM" id="SSF51726">
    <property type="entry name" value="UROD/MetE-like"/>
    <property type="match status" value="1"/>
</dbReference>
<dbReference type="PROSITE" id="PS00906">
    <property type="entry name" value="UROD_1"/>
    <property type="match status" value="1"/>
</dbReference>
<dbReference type="PROSITE" id="PS00907">
    <property type="entry name" value="UROD_2"/>
    <property type="match status" value="1"/>
</dbReference>
<organism>
    <name type="scientific">Acidovorax sp. (strain JS42)</name>
    <dbReference type="NCBI Taxonomy" id="232721"/>
    <lineage>
        <taxon>Bacteria</taxon>
        <taxon>Pseudomonadati</taxon>
        <taxon>Pseudomonadota</taxon>
        <taxon>Betaproteobacteria</taxon>
        <taxon>Burkholderiales</taxon>
        <taxon>Comamonadaceae</taxon>
        <taxon>Acidovorax</taxon>
    </lineage>
</organism>
<sequence length="370" mass="40219">MSFAPLQNDTFLRACRRQATDYTPLWLMRQAGRYLPEYKATRAKAGSFMGLATNVEYATEVTLQPLERFPLDAAILFSDILTVPDAMGLGLSFAEGEGPRFAKAVRDEADVAALAVPDLDKLRYVFDAVTSIRRALNGRVPLIGFSGSPWTLACYMVEGKGSDDYRLVKTLMYSRPDLMHRILAVNADAVAAYLNAQIDAGAQAVMVFDSWGGVLADGCFQQFSLEYTRRVLAQLKRTGVDGQDVPRIVFTKGGGIWLDDMKDIDCEVLGLDWTAHLGKARAIVGGQVGGPGKALQGNIDPNVLFAPPEAVAAQVRAVLDSFGTPHTDKTTTGPTHIFNLGHGISQFTPPEHVAALVEAVHGYSRSLRQR</sequence>
<accession>A1WCJ3</accession>
<proteinExistence type="inferred from homology"/>
<protein>
    <recommendedName>
        <fullName evidence="1">Uroporphyrinogen decarboxylase</fullName>
        <shortName evidence="1">UPD</shortName>
        <shortName evidence="1">URO-D</shortName>
        <ecNumber evidence="1">4.1.1.37</ecNumber>
    </recommendedName>
</protein>
<reference key="1">
    <citation type="submission" date="2006-12" db="EMBL/GenBank/DDBJ databases">
        <title>Complete sequence of chromosome 1 of Acidovorax sp. JS42.</title>
        <authorList>
            <person name="Copeland A."/>
            <person name="Lucas S."/>
            <person name="Lapidus A."/>
            <person name="Barry K."/>
            <person name="Detter J.C."/>
            <person name="Glavina del Rio T."/>
            <person name="Dalin E."/>
            <person name="Tice H."/>
            <person name="Pitluck S."/>
            <person name="Chertkov O."/>
            <person name="Brettin T."/>
            <person name="Bruce D."/>
            <person name="Han C."/>
            <person name="Tapia R."/>
            <person name="Gilna P."/>
            <person name="Schmutz J."/>
            <person name="Larimer F."/>
            <person name="Land M."/>
            <person name="Hauser L."/>
            <person name="Kyrpides N."/>
            <person name="Kim E."/>
            <person name="Stahl D."/>
            <person name="Richardson P."/>
        </authorList>
    </citation>
    <scope>NUCLEOTIDE SEQUENCE [LARGE SCALE GENOMIC DNA]</scope>
    <source>
        <strain>JS42</strain>
    </source>
</reference>
<gene>
    <name evidence="1" type="primary">hemE</name>
    <name type="ordered locus">Ajs_3861</name>
</gene>
<name>DCUP_ACISJ</name>
<keyword id="KW-0963">Cytoplasm</keyword>
<keyword id="KW-0210">Decarboxylase</keyword>
<keyword id="KW-0456">Lyase</keyword>
<keyword id="KW-0627">Porphyrin biosynthesis</keyword>
<evidence type="ECO:0000255" key="1">
    <source>
        <dbReference type="HAMAP-Rule" id="MF_00218"/>
    </source>
</evidence>
<comment type="function">
    <text evidence="1">Catalyzes the decarboxylation of four acetate groups of uroporphyrinogen-III to yield coproporphyrinogen-III.</text>
</comment>
<comment type="catalytic activity">
    <reaction evidence="1">
        <text>uroporphyrinogen III + 4 H(+) = coproporphyrinogen III + 4 CO2</text>
        <dbReference type="Rhea" id="RHEA:19865"/>
        <dbReference type="ChEBI" id="CHEBI:15378"/>
        <dbReference type="ChEBI" id="CHEBI:16526"/>
        <dbReference type="ChEBI" id="CHEBI:57308"/>
        <dbReference type="ChEBI" id="CHEBI:57309"/>
        <dbReference type="EC" id="4.1.1.37"/>
    </reaction>
</comment>
<comment type="pathway">
    <text evidence="1">Porphyrin-containing compound metabolism; protoporphyrin-IX biosynthesis; coproporphyrinogen-III from 5-aminolevulinate: step 4/4.</text>
</comment>
<comment type="subunit">
    <text evidence="1">Homodimer.</text>
</comment>
<comment type="subcellular location">
    <subcellularLocation>
        <location evidence="1">Cytoplasm</location>
    </subcellularLocation>
</comment>
<comment type="similarity">
    <text evidence="1">Belongs to the uroporphyrinogen decarboxylase family.</text>
</comment>
<feature type="chain" id="PRO_1000023866" description="Uroporphyrinogen decarboxylase">
    <location>
        <begin position="1"/>
        <end position="370"/>
    </location>
</feature>
<feature type="binding site" evidence="1">
    <location>
        <begin position="29"/>
        <end position="33"/>
    </location>
    <ligand>
        <name>substrate</name>
    </ligand>
</feature>
<feature type="binding site" evidence="1">
    <location>
        <position position="79"/>
    </location>
    <ligand>
        <name>substrate</name>
    </ligand>
</feature>
<feature type="binding site" evidence="1">
    <location>
        <position position="155"/>
    </location>
    <ligand>
        <name>substrate</name>
    </ligand>
</feature>
<feature type="binding site" evidence="1">
    <location>
        <position position="210"/>
    </location>
    <ligand>
        <name>substrate</name>
    </ligand>
</feature>
<feature type="binding site" evidence="1">
    <location>
        <position position="342"/>
    </location>
    <ligand>
        <name>substrate</name>
    </ligand>
</feature>
<feature type="site" description="Transition state stabilizer" evidence="1">
    <location>
        <position position="79"/>
    </location>
</feature>